<evidence type="ECO:0000250" key="1">
    <source>
        <dbReference type="UniProtKB" id="Q8NBN3"/>
    </source>
</evidence>
<evidence type="ECO:0000255" key="2"/>
<evidence type="ECO:0000256" key="3">
    <source>
        <dbReference type="SAM" id="MobiDB-lite"/>
    </source>
</evidence>
<evidence type="ECO:0000269" key="4">
    <source>
    </source>
</evidence>
<evidence type="ECO:0000269" key="5">
    <source>
    </source>
</evidence>
<evidence type="ECO:0000269" key="6">
    <source>
    </source>
</evidence>
<evidence type="ECO:0000303" key="7">
    <source>
    </source>
</evidence>
<evidence type="ECO:0000303" key="8">
    <source>
    </source>
</evidence>
<evidence type="ECO:0000305" key="9"/>
<evidence type="ECO:0000312" key="10">
    <source>
        <dbReference type="MGI" id="MGI:2441844"/>
    </source>
</evidence>
<evidence type="ECO:0007744" key="11">
    <source>
    </source>
</evidence>
<evidence type="ECO:0007744" key="12">
    <source>
    </source>
</evidence>
<accession>Q8BXN9</accession>
<accession>Q8BTV9</accession>
<accession>Q8BU98</accession>
<accession>Q8R2P9</accession>
<accession>Q8R3S7</accession>
<gene>
    <name evidence="10" type="primary">Tmem87a</name>
</gene>
<keyword id="KW-0025">Alternative splicing</keyword>
<keyword id="KW-1003">Cell membrane</keyword>
<keyword id="KW-0966">Cell projection</keyword>
<keyword id="KW-1015">Disulfide bond</keyword>
<keyword id="KW-0325">Glycoprotein</keyword>
<keyword id="KW-0333">Golgi apparatus</keyword>
<keyword id="KW-0472">Membrane</keyword>
<keyword id="KW-0597">Phosphoprotein</keyword>
<keyword id="KW-1185">Reference proteome</keyword>
<keyword id="KW-0732">Signal</keyword>
<keyword id="KW-0812">Transmembrane</keyword>
<keyword id="KW-1133">Transmembrane helix</keyword>
<dbReference type="EMBL" id="AK044591">
    <property type="protein sequence ID" value="BAC31991.1"/>
    <property type="molecule type" value="mRNA"/>
</dbReference>
<dbReference type="EMBL" id="AK086738">
    <property type="protein sequence ID" value="BAC39731.1"/>
    <property type="status" value="ALT_INIT"/>
    <property type="molecule type" value="mRNA"/>
</dbReference>
<dbReference type="EMBL" id="AK088559">
    <property type="protein sequence ID" value="BAC40424.1"/>
    <property type="status" value="ALT_INIT"/>
    <property type="molecule type" value="mRNA"/>
</dbReference>
<dbReference type="EMBL" id="BC024676">
    <property type="protein sequence ID" value="AAH24676.1"/>
    <property type="status" value="ALT_INIT"/>
    <property type="molecule type" value="mRNA"/>
</dbReference>
<dbReference type="EMBL" id="BC027354">
    <property type="protein sequence ID" value="AAH27354.1"/>
    <property type="molecule type" value="mRNA"/>
</dbReference>
<dbReference type="RefSeq" id="NP_001103966.1">
    <property type="nucleotide sequence ID" value="NM_001110496.1"/>
</dbReference>
<dbReference type="RefSeq" id="NP_001103967.1">
    <property type="nucleotide sequence ID" value="NM_001110497.1"/>
</dbReference>
<dbReference type="RefSeq" id="NP_776095.2">
    <property type="nucleotide sequence ID" value="NM_173734.3"/>
</dbReference>
<dbReference type="SMR" id="Q8BXN9"/>
<dbReference type="BioGRID" id="229241">
    <property type="interactions" value="2"/>
</dbReference>
<dbReference type="FunCoup" id="Q8BXN9">
    <property type="interactions" value="2669"/>
</dbReference>
<dbReference type="STRING" id="10090.ENSMUSP00000087500"/>
<dbReference type="GlyConnect" id="2797">
    <property type="glycosylation" value="1 N-Linked glycan (1 site)"/>
</dbReference>
<dbReference type="GlyCosmos" id="Q8BXN9">
    <property type="glycosylation" value="4 sites, 1 glycan"/>
</dbReference>
<dbReference type="GlyGen" id="Q8BXN9">
    <property type="glycosylation" value="5 sites, 3 N-linked glycans (2 sites)"/>
</dbReference>
<dbReference type="iPTMnet" id="Q8BXN9"/>
<dbReference type="PhosphoSitePlus" id="Q8BXN9"/>
<dbReference type="SwissPalm" id="Q8BXN9"/>
<dbReference type="PaxDb" id="10090-ENSMUSP00000087500"/>
<dbReference type="PeptideAtlas" id="Q8BXN9"/>
<dbReference type="ProteomicsDB" id="259117">
    <molecule id="Q8BXN9-1"/>
</dbReference>
<dbReference type="ProteomicsDB" id="259118">
    <molecule id="Q8BXN9-2"/>
</dbReference>
<dbReference type="ProteomicsDB" id="259119">
    <molecule id="Q8BXN9-3"/>
</dbReference>
<dbReference type="Pumba" id="Q8BXN9"/>
<dbReference type="GeneID" id="211499"/>
<dbReference type="KEGG" id="mmu:211499"/>
<dbReference type="AGR" id="MGI:2441844"/>
<dbReference type="CTD" id="25963"/>
<dbReference type="MGI" id="MGI:2441844">
    <property type="gene designation" value="Tmem87a"/>
</dbReference>
<dbReference type="eggNOG" id="KOG2568">
    <property type="taxonomic scope" value="Eukaryota"/>
</dbReference>
<dbReference type="InParanoid" id="Q8BXN9"/>
<dbReference type="OrthoDB" id="19932at2759"/>
<dbReference type="Reactome" id="R-MMU-8980692">
    <property type="pathway name" value="RHOA GTPase cycle"/>
</dbReference>
<dbReference type="BioGRID-ORCS" id="211499">
    <property type="hits" value="1 hit in 76 CRISPR screens"/>
</dbReference>
<dbReference type="ChiTaRS" id="Tmem87a">
    <property type="organism name" value="mouse"/>
</dbReference>
<dbReference type="PRO" id="PR:Q8BXN9"/>
<dbReference type="Proteomes" id="UP000000589">
    <property type="component" value="Unplaced"/>
</dbReference>
<dbReference type="RNAct" id="Q8BXN9">
    <property type="molecule type" value="protein"/>
</dbReference>
<dbReference type="GO" id="GO:0005794">
    <property type="term" value="C:Golgi apparatus"/>
    <property type="evidence" value="ECO:0000250"/>
    <property type="project" value="UniProtKB"/>
</dbReference>
<dbReference type="GO" id="GO:0032580">
    <property type="term" value="C:Golgi cisterna membrane"/>
    <property type="evidence" value="ECO:0000250"/>
    <property type="project" value="UniProtKB"/>
</dbReference>
<dbReference type="GO" id="GO:0000139">
    <property type="term" value="C:Golgi membrane"/>
    <property type="evidence" value="ECO:0007669"/>
    <property type="project" value="UniProtKB-SubCell"/>
</dbReference>
<dbReference type="GO" id="GO:0005886">
    <property type="term" value="C:plasma membrane"/>
    <property type="evidence" value="ECO:0000250"/>
    <property type="project" value="UniProtKB"/>
</dbReference>
<dbReference type="GO" id="GO:0001726">
    <property type="term" value="C:ruffle"/>
    <property type="evidence" value="ECO:0000250"/>
    <property type="project" value="UniProtKB"/>
</dbReference>
<dbReference type="GO" id="GO:0071260">
    <property type="term" value="P:cellular response to mechanical stimulus"/>
    <property type="evidence" value="ECO:0000250"/>
    <property type="project" value="UniProtKB"/>
</dbReference>
<dbReference type="GO" id="GO:0050976">
    <property type="term" value="P:detection of mechanical stimulus involved in sensory perception of touch"/>
    <property type="evidence" value="ECO:0000315"/>
    <property type="project" value="UniProtKB"/>
</dbReference>
<dbReference type="InterPro" id="IPR053937">
    <property type="entry name" value="GOST_TM"/>
</dbReference>
<dbReference type="InterPro" id="IPR009637">
    <property type="entry name" value="GPR107/GPR108-like"/>
</dbReference>
<dbReference type="InterPro" id="IPR054101">
    <property type="entry name" value="TMEM87A/B_GOLD"/>
</dbReference>
<dbReference type="PANTHER" id="PTHR21229">
    <property type="entry name" value="LUNG SEVEN TRANSMEMBRANE RECEPTOR"/>
    <property type="match status" value="1"/>
</dbReference>
<dbReference type="PANTHER" id="PTHR21229:SF19">
    <property type="entry name" value="TRANSMEMBRANE PROTEIN 87A"/>
    <property type="match status" value="1"/>
</dbReference>
<dbReference type="Pfam" id="PF06814">
    <property type="entry name" value="GOST_TM"/>
    <property type="match status" value="1"/>
</dbReference>
<dbReference type="Pfam" id="PF21901">
    <property type="entry name" value="TMEM87A-B_GOLD"/>
    <property type="match status" value="1"/>
</dbReference>
<comment type="function">
    <text evidence="1 5 6">Potential monoatomic ion channel gated by mechanical force, implicated in normal touch sensitivity through the generation of mechanically activated currents (PubMed:38422143). However, a direct channel activity is debated and an alternative could be that it functions as a chaperone for an unidentified mechanosensitive ion channel (By similarity). Could also be involved in cell mechanosensitivity regulating cell adhesion and migration (PubMed:32228863). May also be involved in retrograde transport from endosomes to the trans-Golgi network (TGN) (By similarity).</text>
</comment>
<comment type="subunit">
    <text evidence="1">May interact with STOML3; STOML3 potentiates the mechanosensitive ion channel activity associated with TMEM87A.</text>
</comment>
<comment type="subcellular location">
    <molecule>Isoform 1</molecule>
    <subcellularLocation>
        <location evidence="1">Cell membrane</location>
        <topology evidence="2">Multi-pass membrane protein</topology>
    </subcellularLocation>
    <subcellularLocation>
        <location evidence="1">Golgi apparatus membrane</location>
        <topology evidence="2">Multi-pass membrane protein</topology>
    </subcellularLocation>
</comment>
<comment type="subcellular location">
    <molecule>Isoform 3</molecule>
    <subcellularLocation>
        <location evidence="1">Cell membrane</location>
        <topology evidence="2">Multi-pass membrane protein</topology>
    </subcellularLocation>
    <subcellularLocation>
        <location evidence="1">Cell projection</location>
        <location evidence="1">Ruffle</location>
    </subcellularLocation>
</comment>
<comment type="alternative products">
    <event type="alternative splicing"/>
    <isoform>
        <id>Q8BXN9-1</id>
        <name>1</name>
        <sequence type="displayed"/>
    </isoform>
    <isoform>
        <id>Q8BXN9-2</id>
        <name>2</name>
        <sequence type="described" ref="VSP_022210"/>
    </isoform>
    <isoform>
        <id>Q8BXN9-3</id>
        <name>3</name>
        <sequence type="described" ref="VSP_022210 VSP_022211 VSP_022212"/>
    </isoform>
</comment>
<comment type="tissue specificity">
    <text evidence="6">Highly expressed in sensory neurons responsive to mechanical force.</text>
</comment>
<comment type="disruption phenotype">
    <text evidence="6">Mice lacking Tmem87a are viable and born at the expected Mendelian ratios. Behavioral indicators of touch sensitivity are profoundly reduced while non mechanosensory modalities, such as heat withdrawal thresholds, are unaltered. This is associated with loss of sensory neurons mechanically activated currents.</text>
</comment>
<comment type="similarity">
    <text evidence="9">Belongs to the LU7TM family. TMEM87 subfamily.</text>
</comment>
<comment type="sequence caution" evidence="9">
    <conflict type="erroneous initiation">
        <sequence resource="EMBL-CDS" id="AAH24676"/>
    </conflict>
    <text>Truncated N-terminus.</text>
</comment>
<comment type="sequence caution" evidence="9">
    <conflict type="erroneous initiation">
        <sequence resource="EMBL-CDS" id="BAC39731"/>
    </conflict>
    <text>Extended N-terminus.</text>
</comment>
<comment type="sequence caution" evidence="9">
    <conflict type="erroneous initiation">
        <sequence resource="EMBL-CDS" id="BAC40424"/>
    </conflict>
    <text>Extended N-terminus.</text>
</comment>
<sequence>MAVAAWLQVSPVIFLLLGAQPFPLSFLGAGPAPVFAADRSKWHIPMPSGKGYFNFGKILFRNTTILLKFDGEPCDQSLNITWFLKSADCYNEIYNFKADEIESYLENLKGKKGLSGRYQTSSRLFQNCSELYKAQSFSGDFTHRLPLLGEKQEAKENATNVTFTGDKIAMHEPLQTWQDAPYIFIVHVGISSSKESPKENALSNLFTMTVEVKGPYEYLTLEDYPLMIFFMVMCIVYVLFGVLWLAWSACYWRDLLRIQFWIGAVIFLGMFEKAVFYAEFQNIRYKGESVQNALVLAELLSAVKRSLARTLVIIVSLGYGIVKPRLGVTLHKVVVAGALYLLFSGMEGVLRVTGAQTDLASLAFIPLAFLDTALCWWIFISLTQTMKLLKLRRNIVKLSLYRHFTNTLILAVAASIVFIIWTTMKFRIVTCQSDWRELWVDDAIWRLLFSMILFVIMILWRPSANNQRFAFSPLSEEDEEDEQKEPMLKESFEGMKMRSTKQEPNGTSKVNKAQEDDLKWVEENVPSSVTDVALPALLDSDEERMITHFERSKME</sequence>
<reference key="1">
    <citation type="journal article" date="2005" name="Science">
        <title>The transcriptional landscape of the mammalian genome.</title>
        <authorList>
            <person name="Carninci P."/>
            <person name="Kasukawa T."/>
            <person name="Katayama S."/>
            <person name="Gough J."/>
            <person name="Frith M.C."/>
            <person name="Maeda N."/>
            <person name="Oyama R."/>
            <person name="Ravasi T."/>
            <person name="Lenhard B."/>
            <person name="Wells C."/>
            <person name="Kodzius R."/>
            <person name="Shimokawa K."/>
            <person name="Bajic V.B."/>
            <person name="Brenner S.E."/>
            <person name="Batalov S."/>
            <person name="Forrest A.R."/>
            <person name="Zavolan M."/>
            <person name="Davis M.J."/>
            <person name="Wilming L.G."/>
            <person name="Aidinis V."/>
            <person name="Allen J.E."/>
            <person name="Ambesi-Impiombato A."/>
            <person name="Apweiler R."/>
            <person name="Aturaliya R.N."/>
            <person name="Bailey T.L."/>
            <person name="Bansal M."/>
            <person name="Baxter L."/>
            <person name="Beisel K.W."/>
            <person name="Bersano T."/>
            <person name="Bono H."/>
            <person name="Chalk A.M."/>
            <person name="Chiu K.P."/>
            <person name="Choudhary V."/>
            <person name="Christoffels A."/>
            <person name="Clutterbuck D.R."/>
            <person name="Crowe M.L."/>
            <person name="Dalla E."/>
            <person name="Dalrymple B.P."/>
            <person name="de Bono B."/>
            <person name="Della Gatta G."/>
            <person name="di Bernardo D."/>
            <person name="Down T."/>
            <person name="Engstrom P."/>
            <person name="Fagiolini M."/>
            <person name="Faulkner G."/>
            <person name="Fletcher C.F."/>
            <person name="Fukushima T."/>
            <person name="Furuno M."/>
            <person name="Futaki S."/>
            <person name="Gariboldi M."/>
            <person name="Georgii-Hemming P."/>
            <person name="Gingeras T.R."/>
            <person name="Gojobori T."/>
            <person name="Green R.E."/>
            <person name="Gustincich S."/>
            <person name="Harbers M."/>
            <person name="Hayashi Y."/>
            <person name="Hensch T.K."/>
            <person name="Hirokawa N."/>
            <person name="Hill D."/>
            <person name="Huminiecki L."/>
            <person name="Iacono M."/>
            <person name="Ikeo K."/>
            <person name="Iwama A."/>
            <person name="Ishikawa T."/>
            <person name="Jakt M."/>
            <person name="Kanapin A."/>
            <person name="Katoh M."/>
            <person name="Kawasawa Y."/>
            <person name="Kelso J."/>
            <person name="Kitamura H."/>
            <person name="Kitano H."/>
            <person name="Kollias G."/>
            <person name="Krishnan S.P."/>
            <person name="Kruger A."/>
            <person name="Kummerfeld S.K."/>
            <person name="Kurochkin I.V."/>
            <person name="Lareau L.F."/>
            <person name="Lazarevic D."/>
            <person name="Lipovich L."/>
            <person name="Liu J."/>
            <person name="Liuni S."/>
            <person name="McWilliam S."/>
            <person name="Madan Babu M."/>
            <person name="Madera M."/>
            <person name="Marchionni L."/>
            <person name="Matsuda H."/>
            <person name="Matsuzawa S."/>
            <person name="Miki H."/>
            <person name="Mignone F."/>
            <person name="Miyake S."/>
            <person name="Morris K."/>
            <person name="Mottagui-Tabar S."/>
            <person name="Mulder N."/>
            <person name="Nakano N."/>
            <person name="Nakauchi H."/>
            <person name="Ng P."/>
            <person name="Nilsson R."/>
            <person name="Nishiguchi S."/>
            <person name="Nishikawa S."/>
            <person name="Nori F."/>
            <person name="Ohara O."/>
            <person name="Okazaki Y."/>
            <person name="Orlando V."/>
            <person name="Pang K.C."/>
            <person name="Pavan W.J."/>
            <person name="Pavesi G."/>
            <person name="Pesole G."/>
            <person name="Petrovsky N."/>
            <person name="Piazza S."/>
            <person name="Reed J."/>
            <person name="Reid J.F."/>
            <person name="Ring B.Z."/>
            <person name="Ringwald M."/>
            <person name="Rost B."/>
            <person name="Ruan Y."/>
            <person name="Salzberg S.L."/>
            <person name="Sandelin A."/>
            <person name="Schneider C."/>
            <person name="Schoenbach C."/>
            <person name="Sekiguchi K."/>
            <person name="Semple C.A."/>
            <person name="Seno S."/>
            <person name="Sessa L."/>
            <person name="Sheng Y."/>
            <person name="Shibata Y."/>
            <person name="Shimada H."/>
            <person name="Shimada K."/>
            <person name="Silva D."/>
            <person name="Sinclair B."/>
            <person name="Sperling S."/>
            <person name="Stupka E."/>
            <person name="Sugiura K."/>
            <person name="Sultana R."/>
            <person name="Takenaka Y."/>
            <person name="Taki K."/>
            <person name="Tammoja K."/>
            <person name="Tan S.L."/>
            <person name="Tang S."/>
            <person name="Taylor M.S."/>
            <person name="Tegner J."/>
            <person name="Teichmann S.A."/>
            <person name="Ueda H.R."/>
            <person name="van Nimwegen E."/>
            <person name="Verardo R."/>
            <person name="Wei C.L."/>
            <person name="Yagi K."/>
            <person name="Yamanishi H."/>
            <person name="Zabarovsky E."/>
            <person name="Zhu S."/>
            <person name="Zimmer A."/>
            <person name="Hide W."/>
            <person name="Bult C."/>
            <person name="Grimmond S.M."/>
            <person name="Teasdale R.D."/>
            <person name="Liu E.T."/>
            <person name="Brusic V."/>
            <person name="Quackenbush J."/>
            <person name="Wahlestedt C."/>
            <person name="Mattick J.S."/>
            <person name="Hume D.A."/>
            <person name="Kai C."/>
            <person name="Sasaki D."/>
            <person name="Tomaru Y."/>
            <person name="Fukuda S."/>
            <person name="Kanamori-Katayama M."/>
            <person name="Suzuki M."/>
            <person name="Aoki J."/>
            <person name="Arakawa T."/>
            <person name="Iida J."/>
            <person name="Imamura K."/>
            <person name="Itoh M."/>
            <person name="Kato T."/>
            <person name="Kawaji H."/>
            <person name="Kawagashira N."/>
            <person name="Kawashima T."/>
            <person name="Kojima M."/>
            <person name="Kondo S."/>
            <person name="Konno H."/>
            <person name="Nakano K."/>
            <person name="Ninomiya N."/>
            <person name="Nishio T."/>
            <person name="Okada M."/>
            <person name="Plessy C."/>
            <person name="Shibata K."/>
            <person name="Shiraki T."/>
            <person name="Suzuki S."/>
            <person name="Tagami M."/>
            <person name="Waki K."/>
            <person name="Watahiki A."/>
            <person name="Okamura-Oho Y."/>
            <person name="Suzuki H."/>
            <person name="Kawai J."/>
            <person name="Hayashizaki Y."/>
        </authorList>
    </citation>
    <scope>NUCLEOTIDE SEQUENCE [LARGE SCALE MRNA] (ISOFORMS 1 AND 3)</scope>
    <source>
        <strain>C57BL/6J</strain>
        <strain>NOD</strain>
        <tissue>Head</tissue>
        <tissue>Retina</tissue>
        <tissue>Thymus</tissue>
    </source>
</reference>
<reference key="2">
    <citation type="journal article" date="2004" name="Genome Res.">
        <title>The status, quality, and expansion of the NIH full-length cDNA project: the Mammalian Gene Collection (MGC).</title>
        <authorList>
            <consortium name="The MGC Project Team"/>
        </authorList>
    </citation>
    <scope>NUCLEOTIDE SEQUENCE [LARGE SCALE MRNA] (ISOFORM 2)</scope>
    <scope>NUCLEOTIDE SEQUENCE [LARGE SCALE MRNA] OF 328-555 (ISOFORM 1)</scope>
    <source>
        <strain>Czech II</strain>
        <strain>FVB/N</strain>
        <tissue>Mammary tumor</tissue>
    </source>
</reference>
<reference key="3">
    <citation type="journal article" date="2009" name="Immunity">
        <title>The phagosomal proteome in interferon-gamma-activated macrophages.</title>
        <authorList>
            <person name="Trost M."/>
            <person name="English L."/>
            <person name="Lemieux S."/>
            <person name="Courcelles M."/>
            <person name="Desjardins M."/>
            <person name="Thibault P."/>
        </authorList>
    </citation>
    <scope>PHOSPHORYLATION [LARGE SCALE ANALYSIS] AT SER-540</scope>
    <scope>IDENTIFICATION BY MASS SPECTROMETRY [LARGE SCALE ANALYSIS]</scope>
</reference>
<reference key="4">
    <citation type="journal article" date="2009" name="Nat. Biotechnol.">
        <title>Mass-spectrometric identification and relative quantification of N-linked cell surface glycoproteins.</title>
        <authorList>
            <person name="Wollscheid B."/>
            <person name="Bausch-Fluck D."/>
            <person name="Henderson C."/>
            <person name="O'Brien R."/>
            <person name="Bibel M."/>
            <person name="Schiess R."/>
            <person name="Aebersold R."/>
            <person name="Watts J.D."/>
        </authorList>
    </citation>
    <scope>GLYCOSYLATION [LARGE SCALE ANALYSIS] AT ASN-157 AND ASN-160</scope>
</reference>
<reference key="5">
    <citation type="journal article" date="2010" name="Cell">
        <title>A tissue-specific atlas of mouse protein phosphorylation and expression.</title>
        <authorList>
            <person name="Huttlin E.L."/>
            <person name="Jedrychowski M.P."/>
            <person name="Elias J.E."/>
            <person name="Goswami T."/>
            <person name="Rad R."/>
            <person name="Beausoleil S.A."/>
            <person name="Villen J."/>
            <person name="Haas W."/>
            <person name="Sowa M.E."/>
            <person name="Gygi S.P."/>
        </authorList>
    </citation>
    <scope>PHOSPHORYLATION [LARGE SCALE ANALYSIS] AT SER-540</scope>
    <scope>IDENTIFICATION BY MASS SPECTROMETRY [LARGE SCALE ANALYSIS]</scope>
    <source>
        <tissue>Brain</tissue>
        <tissue>Kidney</tissue>
        <tissue>Lung</tissue>
        <tissue>Pancreas</tissue>
        <tissue>Spleen</tissue>
        <tissue>Testis</tissue>
    </source>
</reference>
<reference key="6">
    <citation type="journal article" date="2020" name="Elife">
        <title>TMEM87a/Elkin1, a component of a novel mechanoelectrical transduction pathway, modulates melanoma adhesion and migration.</title>
        <authorList>
            <person name="Patkunarajah A."/>
            <person name="Stear J.H."/>
            <person name="Moroni M."/>
            <person name="Schroeter L."/>
            <person name="Blaszkiewicz J."/>
            <person name="Tearle J.L."/>
            <person name="Cox C.D."/>
            <person name="Fuerst C."/>
            <person name="Sanchez-Carranza O."/>
            <person name="Ocana Fernandez M.D.A."/>
            <person name="Fleischer R."/>
            <person name="Eravci M."/>
            <person name="Weise C."/>
            <person name="Martinac B."/>
            <person name="Biro M."/>
            <person name="Lewin G.R."/>
            <person name="Poole K."/>
        </authorList>
    </citation>
    <scope>FUNCTION</scope>
    <scope>MUTAGENESIS OF PHE-271 AND ASN-292</scope>
</reference>
<reference key="7">
    <citation type="journal article" date="2024" name="Science">
        <title>Touch sensation requires the mechanically gated ion channel ELKIN1.</title>
        <authorList>
            <person name="Chakrabarti S."/>
            <person name="Klich J.D."/>
            <person name="Khallaf M.A."/>
            <person name="Hulme A.J."/>
            <person name="Sanchez-Carranza O."/>
            <person name="Baran Z.M."/>
            <person name="Rossi A."/>
            <person name="Huang A.T."/>
            <person name="Pohl T."/>
            <person name="Fleischer R."/>
            <person name="Fuerst C."/>
            <person name="Hammes A."/>
            <person name="Begay V."/>
            <person name="Hoernberg H."/>
            <person name="Finol-Urdaneta R.K."/>
            <person name="Poole K."/>
            <person name="Dottori M."/>
            <person name="Lewin G.R."/>
        </authorList>
    </citation>
    <scope>FUNCTION</scope>
    <scope>TISSUE SPECIFICITY</scope>
    <scope>DISRUPTION PHENOTYPE</scope>
</reference>
<protein>
    <recommendedName>
        <fullName evidence="9">Transmembrane protein 87A</fullName>
    </recommendedName>
    <alternativeName>
        <fullName evidence="1">Elkin1</fullName>
    </alternativeName>
</protein>
<proteinExistence type="evidence at protein level"/>
<feature type="signal peptide" evidence="2">
    <location>
        <begin position="1"/>
        <end position="21"/>
    </location>
</feature>
<feature type="chain" id="PRO_0000270752" description="Transmembrane protein 87A">
    <location>
        <begin position="22"/>
        <end position="555"/>
    </location>
</feature>
<feature type="topological domain" description="Lumenal" evidence="9">
    <location>
        <begin position="22"/>
        <end position="225"/>
    </location>
</feature>
<feature type="transmembrane region" description="Helical; Name=1" evidence="2">
    <location>
        <begin position="226"/>
        <end position="246"/>
    </location>
</feature>
<feature type="topological domain" description="Cytoplasmic" evidence="9">
    <location>
        <begin position="247"/>
        <end position="257"/>
    </location>
</feature>
<feature type="transmembrane region" description="Helical; Name=2" evidence="2">
    <location>
        <begin position="258"/>
        <end position="278"/>
    </location>
</feature>
<feature type="topological domain" description="Lumenal" evidence="9">
    <location>
        <begin position="279"/>
        <end position="305"/>
    </location>
</feature>
<feature type="transmembrane region" description="Helical; Name=3" evidence="2">
    <location>
        <begin position="306"/>
        <end position="322"/>
    </location>
</feature>
<feature type="topological domain" description="Cytoplasmic" evidence="9">
    <location>
        <begin position="323"/>
        <end position="325"/>
    </location>
</feature>
<feature type="transmembrane region" description="Helical; Name=4" evidence="2">
    <location>
        <begin position="326"/>
        <end position="346"/>
    </location>
</feature>
<feature type="topological domain" description="Lumenal" evidence="9">
    <location>
        <begin position="347"/>
        <end position="361"/>
    </location>
</feature>
<feature type="transmembrane region" description="Helical; Name=5" evidence="2">
    <location>
        <begin position="362"/>
        <end position="382"/>
    </location>
</feature>
<feature type="topological domain" description="Cytoplasmic" evidence="9">
    <location>
        <begin position="383"/>
        <end position="403"/>
    </location>
</feature>
<feature type="transmembrane region" description="Helical; Name=6" evidence="2">
    <location>
        <begin position="404"/>
        <end position="424"/>
    </location>
</feature>
<feature type="topological domain" description="Lumenal" evidence="9">
    <location>
        <begin position="425"/>
        <end position="437"/>
    </location>
</feature>
<feature type="transmembrane region" description="Helical; Name=7" evidence="2">
    <location>
        <begin position="438"/>
        <end position="458"/>
    </location>
</feature>
<feature type="topological domain" description="Cytoplasmic" evidence="9">
    <location>
        <begin position="459"/>
        <end position="555"/>
    </location>
</feature>
<feature type="region of interest" description="Disordered" evidence="3">
    <location>
        <begin position="491"/>
        <end position="515"/>
    </location>
</feature>
<feature type="compositionally biased region" description="Polar residues" evidence="3">
    <location>
        <begin position="502"/>
        <end position="511"/>
    </location>
</feature>
<feature type="modified residue" description="Phosphoserine" evidence="11 12">
    <location>
        <position position="540"/>
    </location>
</feature>
<feature type="glycosylation site" description="N-linked (GlcNAc...) asparagine" evidence="2">
    <location>
        <position position="79"/>
    </location>
</feature>
<feature type="glycosylation site" description="N-linked (GlcNAc...) asparagine" evidence="4">
    <location>
        <position position="157"/>
    </location>
</feature>
<feature type="glycosylation site" description="N-linked (GlcNAc...) asparagine" evidence="4">
    <location>
        <position position="160"/>
    </location>
</feature>
<feature type="disulfide bond" evidence="1">
    <location>
        <begin position="74"/>
        <end position="128"/>
    </location>
</feature>
<feature type="disulfide bond" evidence="1">
    <location>
        <begin position="89"/>
        <end position="431"/>
    </location>
</feature>
<feature type="splice variant" id="VSP_022210" description="In isoform 2 and isoform 3." evidence="7 8">
    <original>AQTDLASLAFIPLAFLDTALCW</original>
    <variation>YFSYSLALIVSLALSAIDACIIL</variation>
    <location>
        <begin position="355"/>
        <end position="376"/>
    </location>
</feature>
<feature type="splice variant" id="VSP_022211" description="In isoform 3." evidence="8">
    <original>FAFSPLSEEDEEDEQ</original>
    <variation>RNENEKYQAGTKWD</variation>
    <location>
        <begin position="469"/>
        <end position="483"/>
    </location>
</feature>
<feature type="splice variant" id="VSP_022212" description="In isoform 3." evidence="8">
    <location>
        <begin position="484"/>
        <end position="555"/>
    </location>
</feature>
<feature type="mutagenesis site" description="Increased mechanosensitive channel activity in Tmem87a-expressing cells; when associated with G-292." evidence="5">
    <original>F</original>
    <variation>L</variation>
    <location>
        <position position="271"/>
    </location>
</feature>
<feature type="mutagenesis site" description="Increased mechanosensitive channel activity in Tmem87a-expressing cells; when associated with L-271." evidence="5">
    <original>N</original>
    <variation>G</variation>
    <location>
        <position position="292"/>
    </location>
</feature>
<feature type="sequence conflict" description="In Ref. 1; BAC40424." evidence="9" ref="1">
    <original>G</original>
    <variation>W</variation>
    <location>
        <position position="116"/>
    </location>
</feature>
<feature type="sequence conflict" description="In Ref. 1; BAC40424." evidence="9" ref="1">
    <original>F</original>
    <variation>L</variation>
    <location>
        <position position="141"/>
    </location>
</feature>
<feature type="sequence conflict" description="In Ref. 1; BAC39731." evidence="9" ref="1">
    <original>S</original>
    <variation>G</variation>
    <location>
        <position position="491"/>
    </location>
</feature>
<feature type="sequence conflict" description="In Ref. 1; BAC39731." evidence="9" ref="1">
    <location>
        <position position="514"/>
    </location>
</feature>
<organism>
    <name type="scientific">Mus musculus</name>
    <name type="common">Mouse</name>
    <dbReference type="NCBI Taxonomy" id="10090"/>
    <lineage>
        <taxon>Eukaryota</taxon>
        <taxon>Metazoa</taxon>
        <taxon>Chordata</taxon>
        <taxon>Craniata</taxon>
        <taxon>Vertebrata</taxon>
        <taxon>Euteleostomi</taxon>
        <taxon>Mammalia</taxon>
        <taxon>Eutheria</taxon>
        <taxon>Euarchontoglires</taxon>
        <taxon>Glires</taxon>
        <taxon>Rodentia</taxon>
        <taxon>Myomorpha</taxon>
        <taxon>Muroidea</taxon>
        <taxon>Muridae</taxon>
        <taxon>Murinae</taxon>
        <taxon>Mus</taxon>
        <taxon>Mus</taxon>
    </lineage>
</organism>
<name>TM87A_MOUSE</name>